<sequence length="346" mass="39432">MPGDVGEETLEIGAVVGKRYKVVQKLGEGGCGSVFKVEDTSEKGQHYALKVEFKSQDAGNILKMEVQILSQLISKKHVAKCVASGKKERYSYMVMTLLGESLDSLLKKHGPFLNVSTQVRIGICILFGIKQVHDIGYLHRDLKPANVAMGCKGSADERYFLVLDFGLARQYIADEDDGLKMRRPREKTYFRGTARYCSVAMHDRYEQGRVDDLWALVYILAEMRCRLAWHDVDDKVEIGEMKRKIHDEVLFAKSPVQMLSFVKTVRSTLFYHRPDYEKLFKLLEDVMKCANYKWSDPYHWEPEKKKNPASQGNKFGLGKKGTKESGELPEASFFTVDDFNTNPLGF</sequence>
<protein>
    <recommendedName>
        <fullName>Putative serine/threonine-protein kinase K06H7.1</fullName>
        <ecNumber>2.7.11.1</ecNumber>
    </recommendedName>
</protein>
<keyword id="KW-0067">ATP-binding</keyword>
<keyword id="KW-0418">Kinase</keyword>
<keyword id="KW-0547">Nucleotide-binding</keyword>
<keyword id="KW-1185">Reference proteome</keyword>
<keyword id="KW-0723">Serine/threonine-protein kinase</keyword>
<keyword id="KW-0808">Transferase</keyword>
<reference key="1">
    <citation type="journal article" date="1994" name="Nature">
        <title>2.2 Mb of contiguous nucleotide sequence from chromosome III of C. elegans.</title>
        <authorList>
            <person name="Wilson R."/>
            <person name="Ainscough R."/>
            <person name="Anderson K."/>
            <person name="Baynes C."/>
            <person name="Berks M."/>
            <person name="Bonfield J."/>
            <person name="Burton J."/>
            <person name="Connell M."/>
            <person name="Copsey T."/>
            <person name="Cooper J."/>
            <person name="Coulson A."/>
            <person name="Craxton M."/>
            <person name="Dear S."/>
            <person name="Du Z."/>
            <person name="Durbin R."/>
            <person name="Favello A."/>
            <person name="Fraser A."/>
            <person name="Fulton L."/>
            <person name="Gardner A."/>
            <person name="Green P."/>
            <person name="Hawkins T."/>
            <person name="Hillier L."/>
            <person name="Jier M."/>
            <person name="Johnston L."/>
            <person name="Jones M."/>
            <person name="Kershaw J."/>
            <person name="Kirsten J."/>
            <person name="Laisster N."/>
            <person name="Latreille P."/>
            <person name="Lightning J."/>
            <person name="Lloyd C."/>
            <person name="Mortimore B."/>
            <person name="O'Callaghan M."/>
            <person name="Parsons J."/>
            <person name="Percy C."/>
            <person name="Rifken L."/>
            <person name="Roopra A."/>
            <person name="Saunders D."/>
            <person name="Shownkeen R."/>
            <person name="Sims M."/>
            <person name="Smaldon N."/>
            <person name="Smith A."/>
            <person name="Smith M."/>
            <person name="Sonnhammer E."/>
            <person name="Staden R."/>
            <person name="Sulston J."/>
            <person name="Thierry-Mieg J."/>
            <person name="Thomas K."/>
            <person name="Vaudin M."/>
            <person name="Vaughan K."/>
            <person name="Waterston R."/>
            <person name="Watson A."/>
            <person name="Weinstock L."/>
            <person name="Wilkinson-Sproat J."/>
            <person name="Wohldman P."/>
        </authorList>
    </citation>
    <scope>NUCLEOTIDE SEQUENCE [LARGE SCALE GENOMIC DNA]</scope>
    <source>
        <strain>Bristol N2</strain>
    </source>
</reference>
<reference key="2">
    <citation type="journal article" date="1998" name="Science">
        <title>Genome sequence of the nematode C. elegans: a platform for investigating biology.</title>
        <authorList>
            <consortium name="The C. elegans sequencing consortium"/>
        </authorList>
    </citation>
    <scope>NUCLEOTIDE SEQUENCE [LARGE SCALE GENOMIC DNA]</scope>
    <source>
        <strain>Bristol N2</strain>
    </source>
</reference>
<organism>
    <name type="scientific">Caenorhabditis elegans</name>
    <dbReference type="NCBI Taxonomy" id="6239"/>
    <lineage>
        <taxon>Eukaryota</taxon>
        <taxon>Metazoa</taxon>
        <taxon>Ecdysozoa</taxon>
        <taxon>Nematoda</taxon>
        <taxon>Chromadorea</taxon>
        <taxon>Rhabditida</taxon>
        <taxon>Rhabditina</taxon>
        <taxon>Rhabditomorpha</taxon>
        <taxon>Rhabditoidea</taxon>
        <taxon>Rhabditidae</taxon>
        <taxon>Peloderinae</taxon>
        <taxon>Caenorhabditis</taxon>
    </lineage>
</organism>
<comment type="catalytic activity">
    <reaction>
        <text>L-seryl-[protein] + ATP = O-phospho-L-seryl-[protein] + ADP + H(+)</text>
        <dbReference type="Rhea" id="RHEA:17989"/>
        <dbReference type="Rhea" id="RHEA-COMP:9863"/>
        <dbReference type="Rhea" id="RHEA-COMP:11604"/>
        <dbReference type="ChEBI" id="CHEBI:15378"/>
        <dbReference type="ChEBI" id="CHEBI:29999"/>
        <dbReference type="ChEBI" id="CHEBI:30616"/>
        <dbReference type="ChEBI" id="CHEBI:83421"/>
        <dbReference type="ChEBI" id="CHEBI:456216"/>
        <dbReference type="EC" id="2.7.11.1"/>
    </reaction>
</comment>
<comment type="catalytic activity">
    <reaction>
        <text>L-threonyl-[protein] + ATP = O-phospho-L-threonyl-[protein] + ADP + H(+)</text>
        <dbReference type="Rhea" id="RHEA:46608"/>
        <dbReference type="Rhea" id="RHEA-COMP:11060"/>
        <dbReference type="Rhea" id="RHEA-COMP:11605"/>
        <dbReference type="ChEBI" id="CHEBI:15378"/>
        <dbReference type="ChEBI" id="CHEBI:30013"/>
        <dbReference type="ChEBI" id="CHEBI:30616"/>
        <dbReference type="ChEBI" id="CHEBI:61977"/>
        <dbReference type="ChEBI" id="CHEBI:456216"/>
        <dbReference type="EC" id="2.7.11.1"/>
    </reaction>
</comment>
<comment type="similarity">
    <text evidence="1">Belongs to the protein kinase superfamily. Ser/Thr protein kinase family.</text>
</comment>
<accession>P34516</accession>
<gene>
    <name type="ORF">K06H7.8</name>
</gene>
<evidence type="ECO:0000255" key="1">
    <source>
        <dbReference type="PROSITE-ProRule" id="PRU00159"/>
    </source>
</evidence>
<evidence type="ECO:0000256" key="2">
    <source>
        <dbReference type="SAM" id="MobiDB-lite"/>
    </source>
</evidence>
<dbReference type="EC" id="2.7.11.1"/>
<dbReference type="EMBL" id="FO080533">
    <property type="protein sequence ID" value="CCD64455.1"/>
    <property type="molecule type" value="Genomic_DNA"/>
</dbReference>
<dbReference type="PIR" id="S44848">
    <property type="entry name" value="S44848"/>
</dbReference>
<dbReference type="RefSeq" id="NP_498768.1">
    <property type="nucleotide sequence ID" value="NM_066367.2"/>
</dbReference>
<dbReference type="SMR" id="P34516"/>
<dbReference type="FunCoup" id="P34516">
    <property type="interactions" value="86"/>
</dbReference>
<dbReference type="STRING" id="6239.K06H7.8.1"/>
<dbReference type="PaxDb" id="6239-K06H7.8"/>
<dbReference type="EnsemblMetazoa" id="K06H7.8.1">
    <property type="protein sequence ID" value="K06H7.8.1"/>
    <property type="gene ID" value="WBGene00019459"/>
</dbReference>
<dbReference type="GeneID" id="187079"/>
<dbReference type="KEGG" id="cel:CELE_K06H7.8"/>
<dbReference type="UCSC" id="K06H7.8">
    <property type="organism name" value="c. elegans"/>
</dbReference>
<dbReference type="AGR" id="WB:WBGene00019459"/>
<dbReference type="CTD" id="187079"/>
<dbReference type="WormBase" id="K06H7.8">
    <property type="protein sequence ID" value="CE25045"/>
    <property type="gene ID" value="WBGene00019459"/>
</dbReference>
<dbReference type="eggNOG" id="KOG1164">
    <property type="taxonomic scope" value="Eukaryota"/>
</dbReference>
<dbReference type="GeneTree" id="ENSGT00970000196431"/>
<dbReference type="HOGENOM" id="CLU_019279_2_5_1"/>
<dbReference type="InParanoid" id="P34516"/>
<dbReference type="OMA" id="DPDYDYM"/>
<dbReference type="OrthoDB" id="5979581at2759"/>
<dbReference type="PhylomeDB" id="P34516"/>
<dbReference type="PRO" id="PR:P34516"/>
<dbReference type="Proteomes" id="UP000001940">
    <property type="component" value="Chromosome III"/>
</dbReference>
<dbReference type="Bgee" id="WBGene00019459">
    <property type="expression patterns" value="Expressed in adult organism and 1 other cell type or tissue"/>
</dbReference>
<dbReference type="GO" id="GO:0005737">
    <property type="term" value="C:cytoplasm"/>
    <property type="evidence" value="ECO:0000318"/>
    <property type="project" value="GO_Central"/>
</dbReference>
<dbReference type="GO" id="GO:0005634">
    <property type="term" value="C:nucleus"/>
    <property type="evidence" value="ECO:0000318"/>
    <property type="project" value="GO_Central"/>
</dbReference>
<dbReference type="GO" id="GO:0005524">
    <property type="term" value="F:ATP binding"/>
    <property type="evidence" value="ECO:0007669"/>
    <property type="project" value="UniProtKB-KW"/>
</dbReference>
<dbReference type="GO" id="GO:0106310">
    <property type="term" value="F:protein serine kinase activity"/>
    <property type="evidence" value="ECO:0007669"/>
    <property type="project" value="RHEA"/>
</dbReference>
<dbReference type="GO" id="GO:0004674">
    <property type="term" value="F:protein serine/threonine kinase activity"/>
    <property type="evidence" value="ECO:0000318"/>
    <property type="project" value="GO_Central"/>
</dbReference>
<dbReference type="GO" id="GO:0007165">
    <property type="term" value="P:signal transduction"/>
    <property type="evidence" value="ECO:0000318"/>
    <property type="project" value="GO_Central"/>
</dbReference>
<dbReference type="CDD" id="cd14017">
    <property type="entry name" value="STKc_TTBK"/>
    <property type="match status" value="1"/>
</dbReference>
<dbReference type="FunFam" id="1.10.510.10:FF:001001">
    <property type="entry name" value="Putative serine/threonine-protein kinase K06H7.1"/>
    <property type="match status" value="1"/>
</dbReference>
<dbReference type="FunFam" id="3.30.200.20:FF:000358">
    <property type="entry name" value="Tau tubulin kinase 2b"/>
    <property type="match status" value="1"/>
</dbReference>
<dbReference type="Gene3D" id="1.10.510.10">
    <property type="entry name" value="Transferase(Phosphotransferase) domain 1"/>
    <property type="match status" value="1"/>
</dbReference>
<dbReference type="InterPro" id="IPR050235">
    <property type="entry name" value="CK1_Ser-Thr_kinase"/>
</dbReference>
<dbReference type="InterPro" id="IPR011009">
    <property type="entry name" value="Kinase-like_dom_sf"/>
</dbReference>
<dbReference type="InterPro" id="IPR000719">
    <property type="entry name" value="Prot_kinase_dom"/>
</dbReference>
<dbReference type="InterPro" id="IPR047916">
    <property type="entry name" value="TTBK_Asator-like_STKc"/>
</dbReference>
<dbReference type="PANTHER" id="PTHR11909">
    <property type="entry name" value="CASEIN KINASE-RELATED"/>
    <property type="match status" value="1"/>
</dbReference>
<dbReference type="Pfam" id="PF00069">
    <property type="entry name" value="Pkinase"/>
    <property type="match status" value="1"/>
</dbReference>
<dbReference type="SMART" id="SM00220">
    <property type="entry name" value="S_TKc"/>
    <property type="match status" value="1"/>
</dbReference>
<dbReference type="SUPFAM" id="SSF56112">
    <property type="entry name" value="Protein kinase-like (PK-like)"/>
    <property type="match status" value="1"/>
</dbReference>
<dbReference type="PROSITE" id="PS50011">
    <property type="entry name" value="PROTEIN_KINASE_DOM"/>
    <property type="match status" value="1"/>
</dbReference>
<proteinExistence type="inferred from homology"/>
<name>YMX8_CAEEL</name>
<feature type="chain" id="PRO_0000086830" description="Putative serine/threonine-protein kinase K06H7.1">
    <location>
        <begin position="1"/>
        <end position="346"/>
    </location>
</feature>
<feature type="domain" description="Protein kinase" evidence="1">
    <location>
        <begin position="20"/>
        <end position="287"/>
    </location>
</feature>
<feature type="region of interest" description="Disordered" evidence="2">
    <location>
        <begin position="302"/>
        <end position="326"/>
    </location>
</feature>
<feature type="active site" description="Proton acceptor" evidence="1">
    <location>
        <position position="141"/>
    </location>
</feature>
<feature type="binding site" evidence="1">
    <location>
        <begin position="26"/>
        <end position="34"/>
    </location>
    <ligand>
        <name>ATP</name>
        <dbReference type="ChEBI" id="CHEBI:30616"/>
    </ligand>
</feature>
<feature type="binding site" evidence="1">
    <location>
        <position position="50"/>
    </location>
    <ligand>
        <name>ATP</name>
        <dbReference type="ChEBI" id="CHEBI:30616"/>
    </ligand>
</feature>